<organism>
    <name type="scientific">Methanocorpusculum labreanum (strain ATCC 43576 / DSM 4855 / Z)</name>
    <dbReference type="NCBI Taxonomy" id="410358"/>
    <lineage>
        <taxon>Archaea</taxon>
        <taxon>Methanobacteriati</taxon>
        <taxon>Methanobacteriota</taxon>
        <taxon>Stenosarchaea group</taxon>
        <taxon>Methanomicrobia</taxon>
        <taxon>Methanomicrobiales</taxon>
        <taxon>Methanocorpusculaceae</taxon>
        <taxon>Methanocorpusculum</taxon>
    </lineage>
</organism>
<accession>A2SPZ6</accession>
<keyword id="KW-0227">DNA damage</keyword>
<keyword id="KW-0234">DNA repair</keyword>
<keyword id="KW-0255">Endonuclease</keyword>
<keyword id="KW-0378">Hydrolase</keyword>
<keyword id="KW-0479">Metal-binding</keyword>
<keyword id="KW-0540">Nuclease</keyword>
<keyword id="KW-1185">Reference proteome</keyword>
<keyword id="KW-0862">Zinc</keyword>
<protein>
    <recommendedName>
        <fullName evidence="1">Probable endonuclease 4</fullName>
        <ecNumber evidence="1">3.1.21.2</ecNumber>
    </recommendedName>
    <alternativeName>
        <fullName evidence="1">Endodeoxyribonuclease IV</fullName>
    </alternativeName>
    <alternativeName>
        <fullName evidence="1">Endonuclease IV</fullName>
    </alternativeName>
</protein>
<proteinExistence type="inferred from homology"/>
<comment type="function">
    <text evidence="1">Endonuclease IV plays a role in DNA repair. It cleaves phosphodiester bonds at apurinic or apyrimidinic (AP) sites, generating a 3'-hydroxyl group and a 5'-terminal sugar phosphate.</text>
</comment>
<comment type="catalytic activity">
    <reaction evidence="1">
        <text>Endonucleolytic cleavage to 5'-phosphooligonucleotide end-products.</text>
        <dbReference type="EC" id="3.1.21.2"/>
    </reaction>
</comment>
<comment type="cofactor">
    <cofactor evidence="1">
        <name>Zn(2+)</name>
        <dbReference type="ChEBI" id="CHEBI:29105"/>
    </cofactor>
    <text evidence="1">Binds 3 Zn(2+) ions.</text>
</comment>
<comment type="similarity">
    <text evidence="1">Belongs to the AP endonuclease 2 family.</text>
</comment>
<gene>
    <name evidence="1" type="primary">nfo</name>
    <name type="ordered locus">Mlab_0226</name>
</gene>
<evidence type="ECO:0000255" key="1">
    <source>
        <dbReference type="HAMAP-Rule" id="MF_00152"/>
    </source>
</evidence>
<reference key="1">
    <citation type="journal article" date="2009" name="Stand. Genomic Sci.">
        <title>Complete genome sequence of Methanocorpusculum labreanum type strain Z.</title>
        <authorList>
            <person name="Anderson I.J."/>
            <person name="Sieprawska-Lupa M."/>
            <person name="Goltsman E."/>
            <person name="Lapidus A."/>
            <person name="Copeland A."/>
            <person name="Glavina Del Rio T."/>
            <person name="Tice H."/>
            <person name="Dalin E."/>
            <person name="Barry K."/>
            <person name="Pitluck S."/>
            <person name="Hauser L."/>
            <person name="Land M."/>
            <person name="Lucas S."/>
            <person name="Richardson P."/>
            <person name="Whitman W.B."/>
            <person name="Kyrpides N.C."/>
        </authorList>
    </citation>
    <scope>NUCLEOTIDE SEQUENCE [LARGE SCALE GENOMIC DNA]</scope>
    <source>
        <strain>ATCC 43576 / DSM 4855 / Z</strain>
    </source>
</reference>
<sequence>MIKLGFHVSIAGSLPLAVSRAQEAGCDTFQIFTRSPRVWAAKPIEPSIAEAFIDALNISGIGPVVDHMPYLPNPAAEKPEIYARSIFTMTEELDRCDQLKIPYLVTHLGHHGKEDGHKKGQEKVIAAIGQALDESEGETMILLENTANEKNTVGGTFTDIGVISDALSNERRVGFCFDTCHAAAAGYDLKGHGAETVFGWFNDEAGSLDRLKVIHLNDMKGGVGSHLDRHEHLGLGYLGEETIHDVLTFPKISHCAFIMETPSDEIRTDKDNLAVARRLAV</sequence>
<name>END4_METLZ</name>
<feature type="chain" id="PRO_1000011314" description="Probable endonuclease 4">
    <location>
        <begin position="1"/>
        <end position="281"/>
    </location>
</feature>
<feature type="binding site" evidence="1">
    <location>
        <position position="67"/>
    </location>
    <ligand>
        <name>Zn(2+)</name>
        <dbReference type="ChEBI" id="CHEBI:29105"/>
        <label>1</label>
    </ligand>
</feature>
<feature type="binding site" evidence="1">
    <location>
        <position position="107"/>
    </location>
    <ligand>
        <name>Zn(2+)</name>
        <dbReference type="ChEBI" id="CHEBI:29105"/>
        <label>1</label>
    </ligand>
</feature>
<feature type="binding site" evidence="1">
    <location>
        <position position="144"/>
    </location>
    <ligand>
        <name>Zn(2+)</name>
        <dbReference type="ChEBI" id="CHEBI:29105"/>
        <label>1</label>
    </ligand>
</feature>
<feature type="binding site" evidence="1">
    <location>
        <position position="144"/>
    </location>
    <ligand>
        <name>Zn(2+)</name>
        <dbReference type="ChEBI" id="CHEBI:29105"/>
        <label>2</label>
    </ligand>
</feature>
<feature type="binding site" evidence="1">
    <location>
        <position position="178"/>
    </location>
    <ligand>
        <name>Zn(2+)</name>
        <dbReference type="ChEBI" id="CHEBI:29105"/>
        <label>2</label>
    </ligand>
</feature>
<feature type="binding site" evidence="1">
    <location>
        <position position="181"/>
    </location>
    <ligand>
        <name>Zn(2+)</name>
        <dbReference type="ChEBI" id="CHEBI:29105"/>
        <label>3</label>
    </ligand>
</feature>
<feature type="binding site" evidence="1">
    <location>
        <position position="215"/>
    </location>
    <ligand>
        <name>Zn(2+)</name>
        <dbReference type="ChEBI" id="CHEBI:29105"/>
        <label>2</label>
    </ligand>
</feature>
<feature type="binding site" evidence="1">
    <location>
        <position position="228"/>
    </location>
    <ligand>
        <name>Zn(2+)</name>
        <dbReference type="ChEBI" id="CHEBI:29105"/>
        <label>3</label>
    </ligand>
</feature>
<feature type="binding site" evidence="1">
    <location>
        <position position="230"/>
    </location>
    <ligand>
        <name>Zn(2+)</name>
        <dbReference type="ChEBI" id="CHEBI:29105"/>
        <label>3</label>
    </ligand>
</feature>
<feature type="binding site" evidence="1">
    <location>
        <position position="260"/>
    </location>
    <ligand>
        <name>Zn(2+)</name>
        <dbReference type="ChEBI" id="CHEBI:29105"/>
        <label>2</label>
    </ligand>
</feature>
<dbReference type="EC" id="3.1.21.2" evidence="1"/>
<dbReference type="EMBL" id="CP000559">
    <property type="protein sequence ID" value="ABN06402.1"/>
    <property type="molecule type" value="Genomic_DNA"/>
</dbReference>
<dbReference type="RefSeq" id="WP_011832603.1">
    <property type="nucleotide sequence ID" value="NC_008942.1"/>
</dbReference>
<dbReference type="SMR" id="A2SPZ6"/>
<dbReference type="STRING" id="410358.Mlab_0226"/>
<dbReference type="GeneID" id="4795654"/>
<dbReference type="KEGG" id="mla:Mlab_0226"/>
<dbReference type="eggNOG" id="arCOG01894">
    <property type="taxonomic scope" value="Archaea"/>
</dbReference>
<dbReference type="HOGENOM" id="CLU_025885_0_1_2"/>
<dbReference type="OrthoDB" id="33250at2157"/>
<dbReference type="Proteomes" id="UP000000365">
    <property type="component" value="Chromosome"/>
</dbReference>
<dbReference type="GO" id="GO:0008833">
    <property type="term" value="F:deoxyribonuclease IV (phage-T4-induced) activity"/>
    <property type="evidence" value="ECO:0007669"/>
    <property type="project" value="UniProtKB-UniRule"/>
</dbReference>
<dbReference type="GO" id="GO:0003677">
    <property type="term" value="F:DNA binding"/>
    <property type="evidence" value="ECO:0007669"/>
    <property type="project" value="InterPro"/>
</dbReference>
<dbReference type="GO" id="GO:0003906">
    <property type="term" value="F:DNA-(apurinic or apyrimidinic site) endonuclease activity"/>
    <property type="evidence" value="ECO:0007669"/>
    <property type="project" value="TreeGrafter"/>
</dbReference>
<dbReference type="GO" id="GO:0008081">
    <property type="term" value="F:phosphoric diester hydrolase activity"/>
    <property type="evidence" value="ECO:0007669"/>
    <property type="project" value="TreeGrafter"/>
</dbReference>
<dbReference type="GO" id="GO:0008270">
    <property type="term" value="F:zinc ion binding"/>
    <property type="evidence" value="ECO:0007669"/>
    <property type="project" value="UniProtKB-UniRule"/>
</dbReference>
<dbReference type="GO" id="GO:0006284">
    <property type="term" value="P:base-excision repair"/>
    <property type="evidence" value="ECO:0007669"/>
    <property type="project" value="TreeGrafter"/>
</dbReference>
<dbReference type="CDD" id="cd00019">
    <property type="entry name" value="AP2Ec"/>
    <property type="match status" value="1"/>
</dbReference>
<dbReference type="FunFam" id="3.20.20.150:FF:000001">
    <property type="entry name" value="Probable endonuclease 4"/>
    <property type="match status" value="1"/>
</dbReference>
<dbReference type="Gene3D" id="3.20.20.150">
    <property type="entry name" value="Divalent-metal-dependent TIM barrel enzymes"/>
    <property type="match status" value="1"/>
</dbReference>
<dbReference type="HAMAP" id="MF_00152">
    <property type="entry name" value="Nfo"/>
    <property type="match status" value="1"/>
</dbReference>
<dbReference type="InterPro" id="IPR001719">
    <property type="entry name" value="AP_endonuc_2"/>
</dbReference>
<dbReference type="InterPro" id="IPR018246">
    <property type="entry name" value="AP_endonuc_F2_Zn_BS"/>
</dbReference>
<dbReference type="InterPro" id="IPR036237">
    <property type="entry name" value="Xyl_isomerase-like_sf"/>
</dbReference>
<dbReference type="InterPro" id="IPR013022">
    <property type="entry name" value="Xyl_isomerase-like_TIM-brl"/>
</dbReference>
<dbReference type="NCBIfam" id="TIGR00587">
    <property type="entry name" value="nfo"/>
    <property type="match status" value="1"/>
</dbReference>
<dbReference type="PANTHER" id="PTHR21445:SF0">
    <property type="entry name" value="APURINIC-APYRIMIDINIC ENDONUCLEASE"/>
    <property type="match status" value="1"/>
</dbReference>
<dbReference type="PANTHER" id="PTHR21445">
    <property type="entry name" value="ENDONUCLEASE IV ENDODEOXYRIBONUCLEASE IV"/>
    <property type="match status" value="1"/>
</dbReference>
<dbReference type="Pfam" id="PF01261">
    <property type="entry name" value="AP_endonuc_2"/>
    <property type="match status" value="1"/>
</dbReference>
<dbReference type="SMART" id="SM00518">
    <property type="entry name" value="AP2Ec"/>
    <property type="match status" value="1"/>
</dbReference>
<dbReference type="SUPFAM" id="SSF51658">
    <property type="entry name" value="Xylose isomerase-like"/>
    <property type="match status" value="1"/>
</dbReference>
<dbReference type="PROSITE" id="PS00730">
    <property type="entry name" value="AP_NUCLEASE_F2_2"/>
    <property type="match status" value="1"/>
</dbReference>
<dbReference type="PROSITE" id="PS51432">
    <property type="entry name" value="AP_NUCLEASE_F2_4"/>
    <property type="match status" value="1"/>
</dbReference>